<organism>
    <name type="scientific">Saccharomyces cerevisiae (strain ATCC 204508 / S288c)</name>
    <name type="common">Baker's yeast</name>
    <dbReference type="NCBI Taxonomy" id="559292"/>
    <lineage>
        <taxon>Eukaryota</taxon>
        <taxon>Fungi</taxon>
        <taxon>Dikarya</taxon>
        <taxon>Ascomycota</taxon>
        <taxon>Saccharomycotina</taxon>
        <taxon>Saccharomycetes</taxon>
        <taxon>Saccharomycetales</taxon>
        <taxon>Saccharomycetaceae</taxon>
        <taxon>Saccharomyces</taxon>
    </lineage>
</organism>
<proteinExistence type="evidence at protein level"/>
<dbReference type="EMBL" id="Z49638">
    <property type="protein sequence ID" value="CAA89670.1"/>
    <property type="molecule type" value="Genomic_DNA"/>
</dbReference>
<dbReference type="EMBL" id="BK006943">
    <property type="protein sequence ID" value="DAA08923.1"/>
    <property type="molecule type" value="Genomic_DNA"/>
</dbReference>
<dbReference type="PIR" id="S57161">
    <property type="entry name" value="S57161"/>
</dbReference>
<dbReference type="RefSeq" id="NP_012672.1">
    <property type="nucleotide sequence ID" value="NM_001181796.2"/>
</dbReference>
<dbReference type="PDB" id="8ADL">
    <property type="method" value="EM"/>
    <property type="resolution" value="2.95 A"/>
    <property type="chains" value="W/X=1-1584"/>
</dbReference>
<dbReference type="PDB" id="8AE6">
    <property type="method" value="EM"/>
    <property type="resolution" value="2.70 A"/>
    <property type="chains" value="W=1-1584"/>
</dbReference>
<dbReference type="PDBsum" id="8ADL"/>
<dbReference type="PDBsum" id="8AE6"/>
<dbReference type="EMDB" id="EMD-15364"/>
<dbReference type="EMDB" id="EMD-15381"/>
<dbReference type="SMR" id="P47170"/>
<dbReference type="BioGRID" id="33894">
    <property type="interactions" value="243"/>
</dbReference>
<dbReference type="ComplexPortal" id="CPX-3231">
    <property type="entry name" value="SEA complex"/>
</dbReference>
<dbReference type="DIP" id="DIP-2589N"/>
<dbReference type="FunCoup" id="P47170">
    <property type="interactions" value="821"/>
</dbReference>
<dbReference type="IntAct" id="P47170">
    <property type="interactions" value="34"/>
</dbReference>
<dbReference type="MINT" id="P47170"/>
<dbReference type="STRING" id="4932.YJR138W"/>
<dbReference type="GlyGen" id="P47170">
    <property type="glycosylation" value="3 sites, 1 O-linked glycan (3 sites)"/>
</dbReference>
<dbReference type="iPTMnet" id="P47170"/>
<dbReference type="PaxDb" id="4932-YJR138W"/>
<dbReference type="PeptideAtlas" id="P47170"/>
<dbReference type="EnsemblFungi" id="YJR138W_mRNA">
    <property type="protein sequence ID" value="YJR138W"/>
    <property type="gene ID" value="YJR138W"/>
</dbReference>
<dbReference type="GeneID" id="853603"/>
<dbReference type="KEGG" id="sce:YJR138W"/>
<dbReference type="AGR" id="SGD:S000003899"/>
<dbReference type="SGD" id="S000003899">
    <property type="gene designation" value="IML1"/>
</dbReference>
<dbReference type="VEuPathDB" id="FungiDB:YJR138W"/>
<dbReference type="eggNOG" id="KOG3572">
    <property type="taxonomic scope" value="Eukaryota"/>
</dbReference>
<dbReference type="GeneTree" id="ENSGT00390000016559"/>
<dbReference type="HOGENOM" id="CLU_000935_1_1_1"/>
<dbReference type="InParanoid" id="P47170"/>
<dbReference type="OMA" id="SWMNATP"/>
<dbReference type="OrthoDB" id="39497at2759"/>
<dbReference type="BioCyc" id="YEAST:G3O-31754-MONOMER"/>
<dbReference type="BioGRID-ORCS" id="853603">
    <property type="hits" value="1 hit in 10 CRISPR screens"/>
</dbReference>
<dbReference type="PRO" id="PR:P47170"/>
<dbReference type="Proteomes" id="UP000002311">
    <property type="component" value="Chromosome X"/>
</dbReference>
<dbReference type="RNAct" id="P47170">
    <property type="molecule type" value="protein"/>
</dbReference>
<dbReference type="GO" id="GO:0000329">
    <property type="term" value="C:fungal-type vacuole membrane"/>
    <property type="evidence" value="ECO:0007005"/>
    <property type="project" value="SGD"/>
</dbReference>
<dbReference type="GO" id="GO:1990130">
    <property type="term" value="C:GATOR1 complex"/>
    <property type="evidence" value="ECO:0000314"/>
    <property type="project" value="SGD"/>
</dbReference>
<dbReference type="GO" id="GO:0035859">
    <property type="term" value="C:Seh1-associated complex"/>
    <property type="evidence" value="ECO:0000314"/>
    <property type="project" value="SGD"/>
</dbReference>
<dbReference type="GO" id="GO:0005774">
    <property type="term" value="C:vacuolar membrane"/>
    <property type="evidence" value="ECO:0000303"/>
    <property type="project" value="ComplexPortal"/>
</dbReference>
<dbReference type="GO" id="GO:0005096">
    <property type="term" value="F:GTPase activator activity"/>
    <property type="evidence" value="ECO:0000314"/>
    <property type="project" value="SGD"/>
</dbReference>
<dbReference type="GO" id="GO:0006995">
    <property type="term" value="P:cellular response to nitrogen starvation"/>
    <property type="evidence" value="ECO:0000315"/>
    <property type="project" value="SGD"/>
</dbReference>
<dbReference type="GO" id="GO:0034599">
    <property type="term" value="P:cellular response to oxidative stress"/>
    <property type="evidence" value="ECO:0000315"/>
    <property type="project" value="SGD"/>
</dbReference>
<dbReference type="GO" id="GO:0035556">
    <property type="term" value="P:intracellular signal transduction"/>
    <property type="evidence" value="ECO:0007669"/>
    <property type="project" value="InterPro"/>
</dbReference>
<dbReference type="GO" id="GO:0051058">
    <property type="term" value="P:negative regulation of small GTPase mediated signal transduction"/>
    <property type="evidence" value="ECO:0000316"/>
    <property type="project" value="SGD"/>
</dbReference>
<dbReference type="GO" id="GO:0032007">
    <property type="term" value="P:negative regulation of TOR signaling"/>
    <property type="evidence" value="ECO:0000315"/>
    <property type="project" value="SGD"/>
</dbReference>
<dbReference type="GO" id="GO:1904262">
    <property type="term" value="P:negative regulation of TORC1 signaling"/>
    <property type="evidence" value="ECO:0000315"/>
    <property type="project" value="SGD"/>
</dbReference>
<dbReference type="GO" id="GO:0010508">
    <property type="term" value="P:positive regulation of autophagy"/>
    <property type="evidence" value="ECO:0000315"/>
    <property type="project" value="SGD"/>
</dbReference>
<dbReference type="GO" id="GO:0015031">
    <property type="term" value="P:protein transport"/>
    <property type="evidence" value="ECO:0007669"/>
    <property type="project" value="UniProtKB-KW"/>
</dbReference>
<dbReference type="GO" id="GO:2000785">
    <property type="term" value="P:regulation of autophagosome assembly"/>
    <property type="evidence" value="ECO:0000315"/>
    <property type="project" value="SGD"/>
</dbReference>
<dbReference type="GO" id="GO:1903432">
    <property type="term" value="P:regulation of TORC1 signaling"/>
    <property type="evidence" value="ECO:0000314"/>
    <property type="project" value="ComplexPortal"/>
</dbReference>
<dbReference type="CDD" id="cd04449">
    <property type="entry name" value="DEP_DEPDC5-like"/>
    <property type="match status" value="1"/>
</dbReference>
<dbReference type="FunFam" id="1.10.10.10:FF:000707">
    <property type="entry name" value="Vacuolar membrane-associated protein iml1"/>
    <property type="match status" value="1"/>
</dbReference>
<dbReference type="Gene3D" id="1.10.10.10">
    <property type="entry name" value="Winged helix-like DNA-binding domain superfamily/Winged helix DNA-binding domain"/>
    <property type="match status" value="1"/>
</dbReference>
<dbReference type="InterPro" id="IPR000591">
    <property type="entry name" value="DEP_dom"/>
</dbReference>
<dbReference type="InterPro" id="IPR045838">
    <property type="entry name" value="DEPDC5_CTD"/>
</dbReference>
<dbReference type="InterPro" id="IPR027244">
    <property type="entry name" value="IML1"/>
</dbReference>
<dbReference type="InterPro" id="IPR048255">
    <property type="entry name" value="IML1_N"/>
</dbReference>
<dbReference type="InterPro" id="IPR036388">
    <property type="entry name" value="WH-like_DNA-bd_sf"/>
</dbReference>
<dbReference type="InterPro" id="IPR036390">
    <property type="entry name" value="WH_DNA-bd_sf"/>
</dbReference>
<dbReference type="PANTHER" id="PTHR13179">
    <property type="entry name" value="DEP DOMAIN CONTAINING PROTEIN 5"/>
    <property type="match status" value="1"/>
</dbReference>
<dbReference type="PANTHER" id="PTHR13179:SF8">
    <property type="entry name" value="GATOR COMPLEX PROTEIN DEPDC5"/>
    <property type="match status" value="1"/>
</dbReference>
<dbReference type="Pfam" id="PF00610">
    <property type="entry name" value="DEP"/>
    <property type="match status" value="1"/>
</dbReference>
<dbReference type="Pfam" id="PF19418">
    <property type="entry name" value="DEPDC5_CTD"/>
    <property type="match status" value="1"/>
</dbReference>
<dbReference type="Pfam" id="PF12257">
    <property type="entry name" value="IML1"/>
    <property type="match status" value="1"/>
</dbReference>
<dbReference type="SMART" id="SM00049">
    <property type="entry name" value="DEP"/>
    <property type="match status" value="1"/>
</dbReference>
<dbReference type="SUPFAM" id="SSF46785">
    <property type="entry name" value="Winged helix' DNA-binding domain"/>
    <property type="match status" value="1"/>
</dbReference>
<dbReference type="PROSITE" id="PS50186">
    <property type="entry name" value="DEP"/>
    <property type="match status" value="1"/>
</dbReference>
<sequence>MFAKLHGKKQRPISSINSQTPRTSNTTHANSISLSSGNLIVGSNRNLRQKKEQFGSQQRASGRKLISNKENDDNVNNGGDNNYDNGERVHRHHIPGLKIKAYQAELGYHESRFSENLVMLNLVEFPDIKPGDLVELKTYHKNPSASNGDKKIYFIAKDFDGETKRRAKTSNVSILSGQLQTLLDLPSRSRIWIKLKPNKFDLQADVVEFNIKDCLLNRGDMWVLSSKLVDTCVFMDQRLAFLDSIRGTIKGIYRNGKKIVSGYIGEQTRIIFRSESARLIFLIQITDEMWNFEETGEQLFQKMVNSFFPKIFKKWKDVDTHHTITIAFAISMDLSDTSFKDLTPGESLKNSQDYFRIVVDQVSIIHWVDIMETLREEFMEIRKDLLNKQTDKGYSVANGRFSPVIKSNFLELVNFATTILTDPFKQLDLRHTTTHVMIISPGSGLFDVDYSLLRLTGKKLLSLEMTMDLICLSKAPLHIVPLFRYRDFENKLHHCVPLWLSVFFWNDHDKKSNSEWTPRCKIYDLQMMGITENELIREVDVEYLQLNKKVKSLSEFMNDYDKNAFEVKILCAGSNTKQSKKLNSKFDTVFENDVVVKARKIPATATTTHGNTKFIWRGPKVALPAIKDIQKPNVIPDLSIKTIEASFYDDCNTTNDKISTPTTSNNDNLEMNDSLVSVRSADNQNTSLALDSLKGLSKRNSLKDFTQRVITKFISNIDTSKNKKIKSTLLRDDVDNSPLGSNTPLPSSESKISGLKLQQKGLADENVISKRGNLIIKKNLSIFGLPSNEIMSGSPSSYLGSSHTRTSSKLSNMSDKAAFITEGQKSKHDDSNTYSLTQQLKHRISETWVDIKSPSIPVSSEFANELLPIRWKDVWPKYVARKYSKWRSFTTPAELPITISDFPSKDDFDRNFIFRNHSVTLNTDQEQYNQTYKDLLRDMIYMRLLTGFQICVGRQVEKIELSRESGESETVVNKYLDFNQNDAFKLYLMIDSEIHRITCSSSGIIDVERYLRKDEANLFDQVPSYIPLVKTRYESSFRDAMIDPLHVKRESLNWNQIDQVLAGYGDNLIDRKWHGFRAKYVVLPTDIPPNTYSMVINGKSETLNPEEIRVEGLRRLIGSITRSRLRTEKEKKGRKTKREEIQPEVMFYTGPLYNFINEQQTSLESSAINFKDSIFVNDNNLLNRNVELSKLAYQIQRGEDRITLVNRKWHWKKHEKCFVGSEMVNWLIRNFSDIDTREDAIKYGQKVMKEGLFVHVLNKHNFLDGHYFYQFSPEYVMDTNKLEKTNSHRSTLSDPKQMLRKASTGSSNDPSAMTPFSSVVPAISASNASVADAKEPSRPILMLSNSLVIDVDPAGKSSKQESCTVHYDRVHNPDHCFHIRLEWLTTTPKLIDDLVGNWSRLCERYGLKMIEIPWEELCTIPSVNPFHSFVEIKLAINPWEDPEFKDRELFAKSKFYYHVYLLKASGFLLDNRASKFLQNQDIEFDIMYSWGKPQFKYVQYIHHTGAYVAELRENGCLFLAPNNIYISRVNPGNIIGKIHSASSSSLDAQKVILNFKSTCLDYQKLRSIFLDAKEMWITGKIVED</sequence>
<protein>
    <recommendedName>
        <fullName>Vacuolar membrane-associated protein IML1</fullName>
    </recommendedName>
    <alternativeName>
        <fullName>Increased minichromosome loss protein 1</fullName>
    </alternativeName>
    <alternativeName>
        <fullName>SEH-associated protein 1</fullName>
    </alternativeName>
</protein>
<accession>P47170</accession>
<accession>D6VWV7</accession>
<name>IML1_YEAST</name>
<evidence type="ECO:0000255" key="1">
    <source>
        <dbReference type="PROSITE-ProRule" id="PRU00066"/>
    </source>
</evidence>
<evidence type="ECO:0000256" key="2">
    <source>
        <dbReference type="SAM" id="MobiDB-lite"/>
    </source>
</evidence>
<evidence type="ECO:0000269" key="3">
    <source>
    </source>
</evidence>
<evidence type="ECO:0000269" key="4">
    <source>
    </source>
</evidence>
<evidence type="ECO:0000269" key="5">
    <source>
    </source>
</evidence>
<evidence type="ECO:0000305" key="6"/>
<evidence type="ECO:0007744" key="7">
    <source>
    </source>
</evidence>
<evidence type="ECO:0007744" key="8">
    <source>
    </source>
</evidence>
<evidence type="ECO:0007744" key="9">
    <source>
    </source>
</evidence>
<evidence type="ECO:0007829" key="10">
    <source>
        <dbReference type="PDB" id="8ADL"/>
    </source>
</evidence>
<evidence type="ECO:0007829" key="11">
    <source>
        <dbReference type="PDB" id="8AE6"/>
    </source>
</evidence>
<comment type="function">
    <text evidence="5">Component of the SEA complex which coats the vacuolar membrane and is involved in intracellular trafficking, autophagy, response to nitrogen starvation, and amino acid biogenesis.</text>
</comment>
<comment type="subunit">
    <text evidence="5">Component of the SEA complex composed of at least IML1/SEA1, RTC1/SEA2, MTC5/SEA3, NPR2, NPR3, SEA4, SEC13 and SEH1.</text>
</comment>
<comment type="subcellular location">
    <subcellularLocation>
        <location evidence="3 5">Vacuole membrane</location>
        <topology evidence="3 5">Peripheral membrane protein</topology>
    </subcellularLocation>
</comment>
<comment type="miscellaneous">
    <text evidence="4">Present with 279 molecules/cell in log phase SD medium.</text>
</comment>
<comment type="similarity">
    <text evidence="6">Belongs to the IML1 family.</text>
</comment>
<keyword id="KW-0002">3D-structure</keyword>
<keyword id="KW-0472">Membrane</keyword>
<keyword id="KW-0597">Phosphoprotein</keyword>
<keyword id="KW-0653">Protein transport</keyword>
<keyword id="KW-1185">Reference proteome</keyword>
<keyword id="KW-0813">Transport</keyword>
<keyword id="KW-0926">Vacuole</keyword>
<feature type="chain" id="PRO_0000203123" description="Vacuolar membrane-associated protein IML1">
    <location>
        <begin position="1"/>
        <end position="1584"/>
    </location>
</feature>
<feature type="domain" description="DEP" evidence="1">
    <location>
        <begin position="1198"/>
        <end position="1273"/>
    </location>
</feature>
<feature type="region of interest" description="Disordered" evidence="2">
    <location>
        <begin position="1"/>
        <end position="37"/>
    </location>
</feature>
<feature type="region of interest" description="Disordered" evidence="2">
    <location>
        <begin position="49"/>
        <end position="89"/>
    </location>
</feature>
<feature type="region of interest" description="Disordered" evidence="2">
    <location>
        <begin position="732"/>
        <end position="752"/>
    </location>
</feature>
<feature type="region of interest" description="Disordered" evidence="2">
    <location>
        <begin position="1286"/>
        <end position="1312"/>
    </location>
</feature>
<feature type="compositionally biased region" description="Basic residues" evidence="2">
    <location>
        <begin position="1"/>
        <end position="11"/>
    </location>
</feature>
<feature type="compositionally biased region" description="Polar residues" evidence="2">
    <location>
        <begin position="12"/>
        <end position="37"/>
    </location>
</feature>
<feature type="compositionally biased region" description="Low complexity" evidence="2">
    <location>
        <begin position="74"/>
        <end position="84"/>
    </location>
</feature>
<feature type="compositionally biased region" description="Polar residues" evidence="2">
    <location>
        <begin position="738"/>
        <end position="751"/>
    </location>
</feature>
<feature type="compositionally biased region" description="Polar residues" evidence="2">
    <location>
        <begin position="1303"/>
        <end position="1312"/>
    </location>
</feature>
<feature type="modified residue" description="Phosphoserine" evidence="7 8 9">
    <location>
        <position position="680"/>
    </location>
</feature>
<feature type="modified residue" description="Phosphoserine" evidence="8">
    <location>
        <position position="737"/>
    </location>
</feature>
<feature type="strand" evidence="11">
    <location>
        <begin position="102"/>
        <end position="104"/>
    </location>
</feature>
<feature type="strand" evidence="11">
    <location>
        <begin position="107"/>
        <end position="109"/>
    </location>
</feature>
<feature type="turn" evidence="11">
    <location>
        <begin position="111"/>
        <end position="113"/>
    </location>
</feature>
<feature type="strand" evidence="11">
    <location>
        <begin position="117"/>
        <end position="119"/>
    </location>
</feature>
<feature type="turn" evidence="11">
    <location>
        <begin position="122"/>
        <end position="124"/>
    </location>
</feature>
<feature type="strand" evidence="11">
    <location>
        <begin position="133"/>
        <end position="137"/>
    </location>
</feature>
<feature type="strand" evidence="11">
    <location>
        <begin position="140"/>
        <end position="142"/>
    </location>
</feature>
<feature type="turn" evidence="11">
    <location>
        <begin position="145"/>
        <end position="148"/>
    </location>
</feature>
<feature type="strand" evidence="11">
    <location>
        <begin position="151"/>
        <end position="155"/>
    </location>
</feature>
<feature type="helix" evidence="11">
    <location>
        <begin position="161"/>
        <end position="166"/>
    </location>
</feature>
<feature type="strand" evidence="11">
    <location>
        <begin position="173"/>
        <end position="177"/>
    </location>
</feature>
<feature type="helix" evidence="11">
    <location>
        <begin position="178"/>
        <end position="183"/>
    </location>
</feature>
<feature type="strand" evidence="11">
    <location>
        <begin position="191"/>
        <end position="195"/>
    </location>
</feature>
<feature type="helix" evidence="11">
    <location>
        <begin position="200"/>
        <end position="202"/>
    </location>
</feature>
<feature type="strand" evidence="11">
    <location>
        <begin position="205"/>
        <end position="211"/>
    </location>
</feature>
<feature type="helix" evidence="11">
    <location>
        <begin position="218"/>
        <end position="227"/>
    </location>
</feature>
<feature type="turn" evidence="11">
    <location>
        <begin position="228"/>
        <end position="230"/>
    </location>
</feature>
<feature type="strand" evidence="11">
    <location>
        <begin position="231"/>
        <end position="234"/>
    </location>
</feature>
<feature type="turn" evidence="11">
    <location>
        <begin position="242"/>
        <end position="244"/>
    </location>
</feature>
<feature type="strand" evidence="11">
    <location>
        <begin position="252"/>
        <end position="254"/>
    </location>
</feature>
<feature type="strand" evidence="11">
    <location>
        <begin position="260"/>
        <end position="264"/>
    </location>
</feature>
<feature type="strand" evidence="11">
    <location>
        <begin position="269"/>
        <end position="276"/>
    </location>
</feature>
<feature type="strand" evidence="11">
    <location>
        <begin position="278"/>
        <end position="285"/>
    </location>
</feature>
<feature type="helix" evidence="11">
    <location>
        <begin position="287"/>
        <end position="289"/>
    </location>
</feature>
<feature type="strand" evidence="10">
    <location>
        <begin position="294"/>
        <end position="296"/>
    </location>
</feature>
<feature type="helix" evidence="11">
    <location>
        <begin position="299"/>
        <end position="305"/>
    </location>
</feature>
<feature type="helix" evidence="11">
    <location>
        <begin position="308"/>
        <end position="318"/>
    </location>
</feature>
<feature type="strand" evidence="11">
    <location>
        <begin position="323"/>
        <end position="333"/>
    </location>
</feature>
<feature type="helix" evidence="11">
    <location>
        <begin position="339"/>
        <end position="341"/>
    </location>
</feature>
<feature type="strand" evidence="11">
    <location>
        <begin position="349"/>
        <end position="363"/>
    </location>
</feature>
<feature type="helix" evidence="11">
    <location>
        <begin position="364"/>
        <end position="366"/>
    </location>
</feature>
<feature type="helix" evidence="11">
    <location>
        <begin position="367"/>
        <end position="386"/>
    </location>
</feature>
<feature type="strand" evidence="11">
    <location>
        <begin position="387"/>
        <end position="389"/>
    </location>
</feature>
<feature type="strand" evidence="11">
    <location>
        <begin position="393"/>
        <end position="397"/>
    </location>
</feature>
<feature type="helix" evidence="11">
    <location>
        <begin position="409"/>
        <end position="417"/>
    </location>
</feature>
<feature type="helix" evidence="11">
    <location>
        <begin position="418"/>
        <end position="420"/>
    </location>
</feature>
<feature type="strand" evidence="10">
    <location>
        <begin position="423"/>
        <end position="425"/>
    </location>
</feature>
<feature type="strand" evidence="11">
    <location>
        <begin position="434"/>
        <end position="442"/>
    </location>
</feature>
<feature type="strand" evidence="11">
    <location>
        <begin position="444"/>
        <end position="447"/>
    </location>
</feature>
<feature type="helix" evidence="11">
    <location>
        <begin position="450"/>
        <end position="460"/>
    </location>
</feature>
<feature type="strand" evidence="11">
    <location>
        <begin position="467"/>
        <end position="473"/>
    </location>
</feature>
<feature type="strand" evidence="11">
    <location>
        <begin position="480"/>
        <end position="486"/>
    </location>
</feature>
<feature type="strand" evidence="11">
    <location>
        <begin position="492"/>
        <end position="504"/>
    </location>
</feature>
<feature type="helix" evidence="11">
    <location>
        <begin position="523"/>
        <end position="526"/>
    </location>
</feature>
<feature type="turn" evidence="11">
    <location>
        <begin position="532"/>
        <end position="534"/>
    </location>
</feature>
<feature type="helix" evidence="11">
    <location>
        <begin position="553"/>
        <end position="562"/>
    </location>
</feature>
<feature type="strand" evidence="11">
    <location>
        <begin position="848"/>
        <end position="852"/>
    </location>
</feature>
<feature type="helix" evidence="11">
    <location>
        <begin position="860"/>
        <end position="865"/>
    </location>
</feature>
<feature type="turn" evidence="11">
    <location>
        <begin position="870"/>
        <end position="873"/>
    </location>
</feature>
<feature type="helix" evidence="11">
    <location>
        <begin position="887"/>
        <end position="890"/>
    </location>
</feature>
<feature type="strand" evidence="11">
    <location>
        <begin position="897"/>
        <end position="899"/>
    </location>
</feature>
<feature type="helix" evidence="11">
    <location>
        <begin position="905"/>
        <end position="908"/>
    </location>
</feature>
<feature type="strand" evidence="11">
    <location>
        <begin position="913"/>
        <end position="919"/>
    </location>
</feature>
<feature type="turn" evidence="11">
    <location>
        <begin position="923"/>
        <end position="925"/>
    </location>
</feature>
<feature type="strand" evidence="11">
    <location>
        <begin position="926"/>
        <end position="929"/>
    </location>
</feature>
<feature type="helix" evidence="11">
    <location>
        <begin position="932"/>
        <end position="946"/>
    </location>
</feature>
<feature type="strand" evidence="11">
    <location>
        <begin position="949"/>
        <end position="951"/>
    </location>
</feature>
<feature type="helix" evidence="11">
    <location>
        <begin position="955"/>
        <end position="960"/>
    </location>
</feature>
<feature type="strand" evidence="11">
    <location>
        <begin position="986"/>
        <end position="989"/>
    </location>
</feature>
<feature type="strand" evidence="11">
    <location>
        <begin position="991"/>
        <end position="998"/>
    </location>
</feature>
<feature type="strand" evidence="11">
    <location>
        <begin position="1005"/>
        <end position="1011"/>
    </location>
</feature>
<feature type="strand" evidence="11">
    <location>
        <begin position="1020"/>
        <end position="1022"/>
    </location>
</feature>
<feature type="strand" evidence="11">
    <location>
        <begin position="1028"/>
        <end position="1030"/>
    </location>
</feature>
<feature type="turn" evidence="11">
    <location>
        <begin position="1044"/>
        <end position="1046"/>
    </location>
</feature>
<feature type="helix" evidence="11">
    <location>
        <begin position="1054"/>
        <end position="1062"/>
    </location>
</feature>
<feature type="strand" evidence="11">
    <location>
        <begin position="1076"/>
        <end position="1084"/>
    </location>
</feature>
<feature type="helix" evidence="11">
    <location>
        <begin position="1091"/>
        <end position="1093"/>
    </location>
</feature>
<feature type="helix" evidence="11">
    <location>
        <begin position="1105"/>
        <end position="1121"/>
    </location>
</feature>
<feature type="turn" evidence="11">
    <location>
        <begin position="1128"/>
        <end position="1131"/>
    </location>
</feature>
<feature type="helix" evidence="11">
    <location>
        <begin position="1152"/>
        <end position="1158"/>
    </location>
</feature>
<feature type="strand" evidence="11">
    <location>
        <begin position="1340"/>
        <end position="1342"/>
    </location>
</feature>
<feature type="strand" evidence="11">
    <location>
        <begin position="1344"/>
        <end position="1351"/>
    </location>
</feature>
<feature type="strand" evidence="11">
    <location>
        <begin position="1357"/>
        <end position="1359"/>
    </location>
</feature>
<feature type="strand" evidence="11">
    <location>
        <begin position="1362"/>
        <end position="1371"/>
    </location>
</feature>
<feature type="strand" evidence="11">
    <location>
        <begin position="1377"/>
        <end position="1385"/>
    </location>
</feature>
<feature type="helix" evidence="11">
    <location>
        <begin position="1388"/>
        <end position="1404"/>
    </location>
</feature>
<feature type="strand" evidence="11">
    <location>
        <begin position="1407"/>
        <end position="1412"/>
    </location>
</feature>
<feature type="helix" evidence="11">
    <location>
        <begin position="1417"/>
        <end position="1422"/>
    </location>
</feature>
<feature type="strand" evidence="11">
    <location>
        <begin position="1430"/>
        <end position="1432"/>
    </location>
</feature>
<feature type="turn" evidence="11">
    <location>
        <begin position="1438"/>
        <end position="1440"/>
    </location>
</feature>
<feature type="helix" evidence="11">
    <location>
        <begin position="1447"/>
        <end position="1452"/>
    </location>
</feature>
<feature type="helix" evidence="11">
    <location>
        <begin position="1456"/>
        <end position="1464"/>
    </location>
</feature>
<feature type="strand" evidence="11">
    <location>
        <begin position="1467"/>
        <end position="1469"/>
    </location>
</feature>
<feature type="strand" evidence="11">
    <location>
        <begin position="1475"/>
        <end position="1477"/>
    </location>
</feature>
<feature type="strand" evidence="11">
    <location>
        <begin position="1483"/>
        <end position="1488"/>
    </location>
</feature>
<feature type="strand" evidence="11">
    <location>
        <begin position="1496"/>
        <end position="1511"/>
    </location>
</feature>
<feature type="strand" evidence="11">
    <location>
        <begin position="1513"/>
        <end position="1515"/>
    </location>
</feature>
<feature type="strand" evidence="11">
    <location>
        <begin position="1517"/>
        <end position="1521"/>
    </location>
</feature>
<feature type="turn" evidence="11">
    <location>
        <begin position="1523"/>
        <end position="1525"/>
    </location>
</feature>
<feature type="helix" evidence="11">
    <location>
        <begin position="1551"/>
        <end position="1559"/>
    </location>
</feature>
<feature type="helix" evidence="11">
    <location>
        <begin position="1562"/>
        <end position="1577"/>
    </location>
</feature>
<reference key="1">
    <citation type="journal article" date="1996" name="EMBO J.">
        <title>Complete nucleotide sequence of Saccharomyces cerevisiae chromosome X.</title>
        <authorList>
            <person name="Galibert F."/>
            <person name="Alexandraki D."/>
            <person name="Baur A."/>
            <person name="Boles E."/>
            <person name="Chalwatzis N."/>
            <person name="Chuat J.-C."/>
            <person name="Coster F."/>
            <person name="Cziepluch C."/>
            <person name="de Haan M."/>
            <person name="Domdey H."/>
            <person name="Durand P."/>
            <person name="Entian K.-D."/>
            <person name="Gatius M."/>
            <person name="Goffeau A."/>
            <person name="Grivell L.A."/>
            <person name="Hennemann A."/>
            <person name="Herbert C.J."/>
            <person name="Heumann K."/>
            <person name="Hilger F."/>
            <person name="Hollenberg C.P."/>
            <person name="Huang M.-E."/>
            <person name="Jacq C."/>
            <person name="Jauniaux J.-C."/>
            <person name="Katsoulou C."/>
            <person name="Kirchrath L."/>
            <person name="Kleine K."/>
            <person name="Kordes E."/>
            <person name="Koetter P."/>
            <person name="Liebl S."/>
            <person name="Louis E.J."/>
            <person name="Manus V."/>
            <person name="Mewes H.-W."/>
            <person name="Miosga T."/>
            <person name="Obermaier B."/>
            <person name="Perea J."/>
            <person name="Pohl T.M."/>
            <person name="Portetelle D."/>
            <person name="Pujol A."/>
            <person name="Purnelle B."/>
            <person name="Ramezani Rad M."/>
            <person name="Rasmussen S.W."/>
            <person name="Rose M."/>
            <person name="Rossau R."/>
            <person name="Schaaff-Gerstenschlaeger I."/>
            <person name="Smits P.H.M."/>
            <person name="Scarcez T."/>
            <person name="Soriano N."/>
            <person name="To Van D."/>
            <person name="Tzermia M."/>
            <person name="Van Broekhoven A."/>
            <person name="Vandenbol M."/>
            <person name="Wedler H."/>
            <person name="von Wettstein D."/>
            <person name="Wambutt R."/>
            <person name="Zagulski M."/>
            <person name="Zollner A."/>
            <person name="Karpfinger-Hartl L."/>
        </authorList>
    </citation>
    <scope>NUCLEOTIDE SEQUENCE [LARGE SCALE GENOMIC DNA]</scope>
    <source>
        <strain>ATCC 204508 / S288c</strain>
    </source>
</reference>
<reference key="2">
    <citation type="journal article" date="2014" name="G3 (Bethesda)">
        <title>The reference genome sequence of Saccharomyces cerevisiae: Then and now.</title>
        <authorList>
            <person name="Engel S.R."/>
            <person name="Dietrich F.S."/>
            <person name="Fisk D.G."/>
            <person name="Binkley G."/>
            <person name="Balakrishnan R."/>
            <person name="Costanzo M.C."/>
            <person name="Dwight S.S."/>
            <person name="Hitz B.C."/>
            <person name="Karra K."/>
            <person name="Nash R.S."/>
            <person name="Weng S."/>
            <person name="Wong E.D."/>
            <person name="Lloyd P."/>
            <person name="Skrzypek M.S."/>
            <person name="Miyasato S.R."/>
            <person name="Simison M."/>
            <person name="Cherry J.M."/>
        </authorList>
    </citation>
    <scope>GENOME REANNOTATION</scope>
    <source>
        <strain>ATCC 204508 / S288c</strain>
    </source>
</reference>
<reference key="3">
    <citation type="journal article" date="2003" name="Nature">
        <title>Global analysis of protein localization in budding yeast.</title>
        <authorList>
            <person name="Huh W.-K."/>
            <person name="Falvo J.V."/>
            <person name="Gerke L.C."/>
            <person name="Carroll A.S."/>
            <person name="Howson R.W."/>
            <person name="Weissman J.S."/>
            <person name="O'Shea E.K."/>
        </authorList>
    </citation>
    <scope>SUBCELLULAR LOCATION [LARGE SCALE ANALYSIS]</scope>
</reference>
<reference key="4">
    <citation type="journal article" date="2003" name="Nature">
        <title>Global analysis of protein expression in yeast.</title>
        <authorList>
            <person name="Ghaemmaghami S."/>
            <person name="Huh W.-K."/>
            <person name="Bower K."/>
            <person name="Howson R.W."/>
            <person name="Belle A."/>
            <person name="Dephoure N."/>
            <person name="O'Shea E.K."/>
            <person name="Weissman J.S."/>
        </authorList>
    </citation>
    <scope>LEVEL OF PROTEIN EXPRESSION [LARGE SCALE ANALYSIS]</scope>
</reference>
<reference key="5">
    <citation type="journal article" date="2007" name="J. Proteome Res.">
        <title>Large-scale phosphorylation analysis of alpha-factor-arrested Saccharomyces cerevisiae.</title>
        <authorList>
            <person name="Li X."/>
            <person name="Gerber S.A."/>
            <person name="Rudner A.D."/>
            <person name="Beausoleil S.A."/>
            <person name="Haas W."/>
            <person name="Villen J."/>
            <person name="Elias J.E."/>
            <person name="Gygi S.P."/>
        </authorList>
    </citation>
    <scope>PHOSPHORYLATION [LARGE SCALE ANALYSIS] AT SER-680</scope>
    <scope>IDENTIFICATION BY MASS SPECTROMETRY [LARGE SCALE ANALYSIS]</scope>
    <source>
        <strain>ADR376</strain>
    </source>
</reference>
<reference key="6">
    <citation type="journal article" date="2008" name="Mol. Cell. Proteomics">
        <title>A multidimensional chromatography technology for in-depth phosphoproteome analysis.</title>
        <authorList>
            <person name="Albuquerque C.P."/>
            <person name="Smolka M.B."/>
            <person name="Payne S.H."/>
            <person name="Bafna V."/>
            <person name="Eng J."/>
            <person name="Zhou H."/>
        </authorList>
    </citation>
    <scope>PHOSPHORYLATION [LARGE SCALE ANALYSIS] AT SER-680 AND SER-737</scope>
    <scope>IDENTIFICATION BY MASS SPECTROMETRY [LARGE SCALE ANALYSIS]</scope>
</reference>
<reference key="7">
    <citation type="journal article" date="2009" name="Science">
        <title>Global analysis of Cdk1 substrate phosphorylation sites provides insights into evolution.</title>
        <authorList>
            <person name="Holt L.J."/>
            <person name="Tuch B.B."/>
            <person name="Villen J."/>
            <person name="Johnson A.D."/>
            <person name="Gygi S.P."/>
            <person name="Morgan D.O."/>
        </authorList>
    </citation>
    <scope>PHOSPHORYLATION [LARGE SCALE ANALYSIS] AT SER-680</scope>
    <scope>IDENTIFICATION BY MASS SPECTROMETRY [LARGE SCALE ANALYSIS]</scope>
</reference>
<reference key="8">
    <citation type="journal article" date="2011" name="Mol. Cell. Proteomics">
        <title>A conserved coatomer-related complex containing Sec13 and Seh1 dynamically associates with the vacuole in Saccharomyces cerevisiae.</title>
        <authorList>
            <person name="Dokudovskaya S."/>
            <person name="Waharte F."/>
            <person name="Schlessinger A."/>
            <person name="Pieper U."/>
            <person name="Devos D.P."/>
            <person name="Cristea I.M."/>
            <person name="Williams R."/>
            <person name="Salamero J."/>
            <person name="Chait B.T."/>
            <person name="Sali A."/>
            <person name="Field M.C."/>
            <person name="Rout M.P."/>
            <person name="Dargemont C."/>
        </authorList>
    </citation>
    <scope>SUBCELLULAR LOCATION</scope>
    <scope>IDENTIFICATION IN THE SEA COMPLEX</scope>
    <scope>FUNCTION</scope>
</reference>
<gene>
    <name type="primary">IML1</name>
    <name type="synonym">SEA1</name>
    <name type="ordered locus">YJR138W</name>
    <name type="ORF">J2129</name>
</gene>